<sequence>MANVVVTGEQLDKSIREVVRILEDAVGCTAGPKGLTVAIGKSYGAPEVTKDGYKVIKSIKPEDPLALAIANIITQSASQCNDKVGDGTTTCSILTAKVIEEVSKAKAAGADIVCIKEGVLKAKEAVLEALMSMKREVLSEEEIAQVATISANGDKNIGSKIAQCVQEVGKDGVITVEESKGFKELDVEKTDGMQFDRGYLSPYFVTNSEKMLVEFENPYILLTEKKLNIIQPILPILENVARSGRPLLIIAEDVEGEALSTLVLNKLRGGLHVAAVKAPGFGDRRKDMLGDIAILTGAKHVISDDLAIKMEDLTLAELGTAKNIRITKDTTTIIGSVDNSSANVQSRINQIKMQIEASTSDYDKEKLRERLAKLSGGVAVLKVGGSSEVEVKERKDRVEDALHATRAAVEEGVVPGGGAALLYTLSVLENLKSKNDDEQLGINIVKRALQAPIKRIIKNSGSENAPCVIAHLLKQNDKELIFNVDTMNFANAFTSGVIDPLKVVRIAFDFAVSLAAVFMTLNAIVVDVPSKDDANAGAGGMGGMGGMGGF</sequence>
<gene>
    <name evidence="1" type="primary">groEL</name>
    <name evidence="1" type="synonym">groL</name>
    <name type="synonym">mopA</name>
</gene>
<keyword id="KW-0067">ATP-binding</keyword>
<keyword id="KW-0143">Chaperone</keyword>
<keyword id="KW-0963">Cytoplasm</keyword>
<keyword id="KW-0413">Isomerase</keyword>
<keyword id="KW-0547">Nucleotide-binding</keyword>
<protein>
    <recommendedName>
        <fullName evidence="1">Chaperonin GroEL</fullName>
        <ecNumber evidence="1">5.6.1.7</ecNumber>
    </recommendedName>
    <alternativeName>
        <fullName evidence="1">60 kDa chaperonin</fullName>
    </alternativeName>
    <alternativeName>
        <fullName evidence="1">Chaperonin-60</fullName>
        <shortName evidence="1">Cpn60</shortName>
    </alternativeName>
</protein>
<evidence type="ECO:0000255" key="1">
    <source>
        <dbReference type="HAMAP-Rule" id="MF_00600"/>
    </source>
</evidence>
<feature type="chain" id="PRO_0000063362" description="Chaperonin GroEL">
    <location>
        <begin position="1"/>
        <end position="550"/>
    </location>
</feature>
<feature type="binding site" evidence="1">
    <location>
        <begin position="29"/>
        <end position="32"/>
    </location>
    <ligand>
        <name>ATP</name>
        <dbReference type="ChEBI" id="CHEBI:30616"/>
    </ligand>
</feature>
<feature type="binding site" evidence="1">
    <location>
        <position position="50"/>
    </location>
    <ligand>
        <name>ATP</name>
        <dbReference type="ChEBI" id="CHEBI:30616"/>
    </ligand>
</feature>
<feature type="binding site" evidence="1">
    <location>
        <begin position="86"/>
        <end position="90"/>
    </location>
    <ligand>
        <name>ATP</name>
        <dbReference type="ChEBI" id="CHEBI:30616"/>
    </ligand>
</feature>
<feature type="binding site" evidence="1">
    <location>
        <position position="417"/>
    </location>
    <ligand>
        <name>ATP</name>
        <dbReference type="ChEBI" id="CHEBI:30616"/>
    </ligand>
</feature>
<feature type="binding site" evidence="1">
    <location>
        <position position="499"/>
    </location>
    <ligand>
        <name>ATP</name>
        <dbReference type="ChEBI" id="CHEBI:30616"/>
    </ligand>
</feature>
<organism>
    <name type="scientific">Ehrlichia chaffeensis</name>
    <dbReference type="NCBI Taxonomy" id="945"/>
    <lineage>
        <taxon>Bacteria</taxon>
        <taxon>Pseudomonadati</taxon>
        <taxon>Pseudomonadota</taxon>
        <taxon>Alphaproteobacteria</taxon>
        <taxon>Rickettsiales</taxon>
        <taxon>Anaplasmataceae</taxon>
        <taxon>Ehrlichia</taxon>
    </lineage>
</organism>
<dbReference type="EC" id="5.6.1.7" evidence="1"/>
<dbReference type="EMBL" id="L10917">
    <property type="protein sequence ID" value="AAB49805.1"/>
    <property type="molecule type" value="Genomic_DNA"/>
</dbReference>
<dbReference type="PIR" id="S61297">
    <property type="entry name" value="S61297"/>
</dbReference>
<dbReference type="SMR" id="P42382"/>
<dbReference type="OMA" id="TDTDKME"/>
<dbReference type="GO" id="GO:0005737">
    <property type="term" value="C:cytoplasm"/>
    <property type="evidence" value="ECO:0007669"/>
    <property type="project" value="UniProtKB-SubCell"/>
</dbReference>
<dbReference type="GO" id="GO:0005524">
    <property type="term" value="F:ATP binding"/>
    <property type="evidence" value="ECO:0007669"/>
    <property type="project" value="UniProtKB-UniRule"/>
</dbReference>
<dbReference type="GO" id="GO:0140662">
    <property type="term" value="F:ATP-dependent protein folding chaperone"/>
    <property type="evidence" value="ECO:0007669"/>
    <property type="project" value="InterPro"/>
</dbReference>
<dbReference type="GO" id="GO:0016853">
    <property type="term" value="F:isomerase activity"/>
    <property type="evidence" value="ECO:0007669"/>
    <property type="project" value="UniProtKB-KW"/>
</dbReference>
<dbReference type="GO" id="GO:0051082">
    <property type="term" value="F:unfolded protein binding"/>
    <property type="evidence" value="ECO:0007669"/>
    <property type="project" value="UniProtKB-UniRule"/>
</dbReference>
<dbReference type="GO" id="GO:0042026">
    <property type="term" value="P:protein refolding"/>
    <property type="evidence" value="ECO:0007669"/>
    <property type="project" value="UniProtKB-UniRule"/>
</dbReference>
<dbReference type="CDD" id="cd03344">
    <property type="entry name" value="GroEL"/>
    <property type="match status" value="1"/>
</dbReference>
<dbReference type="FunFam" id="3.50.7.10:FF:000001">
    <property type="entry name" value="60 kDa chaperonin"/>
    <property type="match status" value="1"/>
</dbReference>
<dbReference type="Gene3D" id="3.50.7.10">
    <property type="entry name" value="GroEL"/>
    <property type="match status" value="1"/>
</dbReference>
<dbReference type="Gene3D" id="1.10.560.10">
    <property type="entry name" value="GroEL-like equatorial domain"/>
    <property type="match status" value="1"/>
</dbReference>
<dbReference type="Gene3D" id="3.30.260.10">
    <property type="entry name" value="TCP-1-like chaperonin intermediate domain"/>
    <property type="match status" value="1"/>
</dbReference>
<dbReference type="HAMAP" id="MF_00600">
    <property type="entry name" value="CH60"/>
    <property type="match status" value="1"/>
</dbReference>
<dbReference type="InterPro" id="IPR018370">
    <property type="entry name" value="Chaperonin_Cpn60_CS"/>
</dbReference>
<dbReference type="InterPro" id="IPR001844">
    <property type="entry name" value="Cpn60/GroEL"/>
</dbReference>
<dbReference type="InterPro" id="IPR002423">
    <property type="entry name" value="Cpn60/GroEL/TCP-1"/>
</dbReference>
<dbReference type="InterPro" id="IPR027409">
    <property type="entry name" value="GroEL-like_apical_dom_sf"/>
</dbReference>
<dbReference type="InterPro" id="IPR027413">
    <property type="entry name" value="GROEL-like_equatorial_sf"/>
</dbReference>
<dbReference type="InterPro" id="IPR027410">
    <property type="entry name" value="TCP-1-like_intermed_sf"/>
</dbReference>
<dbReference type="NCBIfam" id="TIGR02348">
    <property type="entry name" value="GroEL"/>
    <property type="match status" value="1"/>
</dbReference>
<dbReference type="NCBIfam" id="NF000592">
    <property type="entry name" value="PRK00013.1"/>
    <property type="match status" value="1"/>
</dbReference>
<dbReference type="NCBIfam" id="NF009487">
    <property type="entry name" value="PRK12849.1"/>
    <property type="match status" value="1"/>
</dbReference>
<dbReference type="NCBIfam" id="NF009488">
    <property type="entry name" value="PRK12850.1"/>
    <property type="match status" value="1"/>
</dbReference>
<dbReference type="NCBIfam" id="NF009489">
    <property type="entry name" value="PRK12851.1"/>
    <property type="match status" value="1"/>
</dbReference>
<dbReference type="PANTHER" id="PTHR45633">
    <property type="entry name" value="60 KDA HEAT SHOCK PROTEIN, MITOCHONDRIAL"/>
    <property type="match status" value="1"/>
</dbReference>
<dbReference type="Pfam" id="PF00118">
    <property type="entry name" value="Cpn60_TCP1"/>
    <property type="match status" value="1"/>
</dbReference>
<dbReference type="PRINTS" id="PR00298">
    <property type="entry name" value="CHAPERONIN60"/>
</dbReference>
<dbReference type="SUPFAM" id="SSF52029">
    <property type="entry name" value="GroEL apical domain-like"/>
    <property type="match status" value="1"/>
</dbReference>
<dbReference type="SUPFAM" id="SSF48592">
    <property type="entry name" value="GroEL equatorial domain-like"/>
    <property type="match status" value="1"/>
</dbReference>
<dbReference type="SUPFAM" id="SSF54849">
    <property type="entry name" value="GroEL-intermediate domain like"/>
    <property type="match status" value="1"/>
</dbReference>
<dbReference type="PROSITE" id="PS00296">
    <property type="entry name" value="CHAPERONINS_CPN60"/>
    <property type="match status" value="1"/>
</dbReference>
<proteinExistence type="inferred from homology"/>
<comment type="function">
    <text evidence="1">Together with its co-chaperonin GroES, plays an essential role in assisting protein folding. The GroEL-GroES system forms a nano-cage that allows encapsulation of the non-native substrate proteins and provides a physical environment optimized to promote and accelerate protein folding.</text>
</comment>
<comment type="catalytic activity">
    <reaction evidence="1">
        <text>ATP + H2O + a folded polypeptide = ADP + phosphate + an unfolded polypeptide.</text>
        <dbReference type="EC" id="5.6.1.7"/>
    </reaction>
</comment>
<comment type="subunit">
    <text evidence="1">Forms a cylinder of 14 subunits composed of two heptameric rings stacked back-to-back. Interacts with the co-chaperonin GroES.</text>
</comment>
<comment type="subcellular location">
    <subcellularLocation>
        <location evidence="1">Cytoplasm</location>
    </subcellularLocation>
</comment>
<comment type="similarity">
    <text evidence="1">Belongs to the chaperonin (HSP60) family.</text>
</comment>
<name>CH60_EHRCH</name>
<reference key="1">
    <citation type="journal article" date="1993" name="Infect. Immun.">
        <title>Ehrlichia chaffeensis expresses an immunoreactive protein homologous to the Escherichia coli GroEL protein.</title>
        <authorList>
            <person name="Sumner J.W."/>
            <person name="Sims K.C."/>
            <person name="Jones D.C."/>
            <person name="Anderson B.E."/>
        </authorList>
    </citation>
    <scope>NUCLEOTIDE SEQUENCE [GENOMIC DNA]</scope>
</reference>
<accession>P42382</accession>